<comment type="function">
    <text evidence="1">Bidirectionally degrades single-stranded DNA into large acid-insoluble oligonucleotides, which are then degraded further into small acid-soluble oligonucleotides.</text>
</comment>
<comment type="catalytic activity">
    <reaction evidence="1">
        <text>Exonucleolytic cleavage in either 5'- to 3'- or 3'- to 5'-direction to yield nucleoside 5'-phosphates.</text>
        <dbReference type="EC" id="3.1.11.6"/>
    </reaction>
</comment>
<comment type="subunit">
    <text evidence="1">Heterooligomer composed of large and small subunits.</text>
</comment>
<comment type="subcellular location">
    <subcellularLocation>
        <location evidence="1">Cytoplasm</location>
    </subcellularLocation>
</comment>
<comment type="similarity">
    <text evidence="1">Belongs to the XseA family.</text>
</comment>
<protein>
    <recommendedName>
        <fullName evidence="1">Exodeoxyribonuclease 7 large subunit</fullName>
        <ecNumber evidence="1">3.1.11.6</ecNumber>
    </recommendedName>
    <alternativeName>
        <fullName evidence="1">Exodeoxyribonuclease VII large subunit</fullName>
        <shortName evidence="1">Exonuclease VII large subunit</shortName>
    </alternativeName>
</protein>
<reference key="1">
    <citation type="submission" date="2007-05" db="EMBL/GenBank/DDBJ databases">
        <title>Complete sequence of Thermotoga petrophila RKU-1.</title>
        <authorList>
            <consortium name="US DOE Joint Genome Institute"/>
            <person name="Copeland A."/>
            <person name="Lucas S."/>
            <person name="Lapidus A."/>
            <person name="Barry K."/>
            <person name="Glavina del Rio T."/>
            <person name="Dalin E."/>
            <person name="Tice H."/>
            <person name="Pitluck S."/>
            <person name="Sims D."/>
            <person name="Brettin T."/>
            <person name="Bruce D."/>
            <person name="Detter J.C."/>
            <person name="Han C."/>
            <person name="Tapia R."/>
            <person name="Schmutz J."/>
            <person name="Larimer F."/>
            <person name="Land M."/>
            <person name="Hauser L."/>
            <person name="Kyrpides N."/>
            <person name="Mikhailova N."/>
            <person name="Nelson K."/>
            <person name="Gogarten J.P."/>
            <person name="Noll K."/>
            <person name="Richardson P."/>
        </authorList>
    </citation>
    <scope>NUCLEOTIDE SEQUENCE [LARGE SCALE GENOMIC DNA]</scope>
    <source>
        <strain>ATCC BAA-488 / DSM 13995 / JCM 10881 / RKU-1</strain>
    </source>
</reference>
<accession>A5ILK0</accession>
<sequence length="394" mass="45193">MKDYTYSVTEINEYIKDLIEGDPYLTNVSVYGEISGVRPRKGHIFFSLVEENARLECVIFGGDNMGIRLQEGRMALVEGSVSVYIPHGTYRFICSNVRYLDRVGMYQIKFETTLKKLLEEGLLSRPKKTVPRFPRKIGIITSRDSAALQDVIRTARERKAPIEIYVFHTSVQGDSAREELIKALRKANEYDLDLVMIVRGGGSKEDLWVFNEEDVIREILKLRHPVVTGIGHEIDRVIADFVADVSMHTPTGAAEYVIPDASEIHEDLDSFLEKLIASLSNRFDMEERRLETLYFRLRMIGRRKLELNEFKIERVKELAAKLRKKLMDCFEQDQEKLESLGRMLESLNPLRPLERGFVLVKKEGEIVKESSDLKRGDVVSLVFKDGTKKAQVIG</sequence>
<dbReference type="EC" id="3.1.11.6" evidence="1"/>
<dbReference type="EMBL" id="CP000702">
    <property type="protein sequence ID" value="ABQ47073.1"/>
    <property type="molecule type" value="Genomic_DNA"/>
</dbReference>
<dbReference type="RefSeq" id="WP_011943603.1">
    <property type="nucleotide sequence ID" value="NC_009486.1"/>
</dbReference>
<dbReference type="SMR" id="A5ILK0"/>
<dbReference type="STRING" id="390874.Tpet_1056"/>
<dbReference type="KEGG" id="tpt:Tpet_1056"/>
<dbReference type="eggNOG" id="COG1570">
    <property type="taxonomic scope" value="Bacteria"/>
</dbReference>
<dbReference type="HOGENOM" id="CLU_023625_2_0_0"/>
<dbReference type="Proteomes" id="UP000006558">
    <property type="component" value="Chromosome"/>
</dbReference>
<dbReference type="GO" id="GO:0005737">
    <property type="term" value="C:cytoplasm"/>
    <property type="evidence" value="ECO:0007669"/>
    <property type="project" value="UniProtKB-SubCell"/>
</dbReference>
<dbReference type="GO" id="GO:0009318">
    <property type="term" value="C:exodeoxyribonuclease VII complex"/>
    <property type="evidence" value="ECO:0007669"/>
    <property type="project" value="InterPro"/>
</dbReference>
<dbReference type="GO" id="GO:0008855">
    <property type="term" value="F:exodeoxyribonuclease VII activity"/>
    <property type="evidence" value="ECO:0007669"/>
    <property type="project" value="UniProtKB-UniRule"/>
</dbReference>
<dbReference type="GO" id="GO:0003676">
    <property type="term" value="F:nucleic acid binding"/>
    <property type="evidence" value="ECO:0007669"/>
    <property type="project" value="InterPro"/>
</dbReference>
<dbReference type="GO" id="GO:0006308">
    <property type="term" value="P:DNA catabolic process"/>
    <property type="evidence" value="ECO:0007669"/>
    <property type="project" value="UniProtKB-UniRule"/>
</dbReference>
<dbReference type="CDD" id="cd04489">
    <property type="entry name" value="ExoVII_LU_OBF"/>
    <property type="match status" value="1"/>
</dbReference>
<dbReference type="HAMAP" id="MF_00378">
    <property type="entry name" value="Exonuc_7_L"/>
    <property type="match status" value="1"/>
</dbReference>
<dbReference type="InterPro" id="IPR003753">
    <property type="entry name" value="Exonuc_VII_L"/>
</dbReference>
<dbReference type="InterPro" id="IPR020579">
    <property type="entry name" value="Exonuc_VII_lsu_C"/>
</dbReference>
<dbReference type="InterPro" id="IPR025824">
    <property type="entry name" value="OB-fold_nuc-bd_dom"/>
</dbReference>
<dbReference type="NCBIfam" id="TIGR00237">
    <property type="entry name" value="xseA"/>
    <property type="match status" value="1"/>
</dbReference>
<dbReference type="PANTHER" id="PTHR30008">
    <property type="entry name" value="EXODEOXYRIBONUCLEASE 7 LARGE SUBUNIT"/>
    <property type="match status" value="1"/>
</dbReference>
<dbReference type="PANTHER" id="PTHR30008:SF0">
    <property type="entry name" value="EXODEOXYRIBONUCLEASE 7 LARGE SUBUNIT"/>
    <property type="match status" value="1"/>
</dbReference>
<dbReference type="Pfam" id="PF02601">
    <property type="entry name" value="Exonuc_VII_L"/>
    <property type="match status" value="2"/>
</dbReference>
<dbReference type="Pfam" id="PF13742">
    <property type="entry name" value="tRNA_anti_2"/>
    <property type="match status" value="1"/>
</dbReference>
<name>EX7L_THEP1</name>
<evidence type="ECO:0000255" key="1">
    <source>
        <dbReference type="HAMAP-Rule" id="MF_00378"/>
    </source>
</evidence>
<proteinExistence type="inferred from homology"/>
<gene>
    <name evidence="1" type="primary">xseA</name>
    <name type="ordered locus">Tpet_1056</name>
</gene>
<feature type="chain" id="PRO_1000048789" description="Exodeoxyribonuclease 7 large subunit">
    <location>
        <begin position="1"/>
        <end position="394"/>
    </location>
</feature>
<organism>
    <name type="scientific">Thermotoga petrophila (strain ATCC BAA-488 / DSM 13995 / JCM 10881 / RKU-1)</name>
    <dbReference type="NCBI Taxonomy" id="390874"/>
    <lineage>
        <taxon>Bacteria</taxon>
        <taxon>Thermotogati</taxon>
        <taxon>Thermotogota</taxon>
        <taxon>Thermotogae</taxon>
        <taxon>Thermotogales</taxon>
        <taxon>Thermotogaceae</taxon>
        <taxon>Thermotoga</taxon>
    </lineage>
</organism>
<keyword id="KW-0963">Cytoplasm</keyword>
<keyword id="KW-0269">Exonuclease</keyword>
<keyword id="KW-0378">Hydrolase</keyword>
<keyword id="KW-0540">Nuclease</keyword>